<protein>
    <recommendedName>
        <fullName evidence="1">Probable 4-amino-4-deoxy-L-arabinose-phosphoundecaprenol flippase subunit ArnF</fullName>
        <shortName evidence="1">L-Ara4N-phosphoundecaprenol flippase subunit ArnF</shortName>
    </recommendedName>
    <alternativeName>
        <fullName evidence="1">Undecaprenyl phosphate-aminoarabinose flippase subunit ArnF</fullName>
    </alternativeName>
</protein>
<sequence>MGLMWGLFSVIIASAAQLSLGYAASHLPPMTQFWDFIAAFFAFGPGARMLVVGLVGYLLSVFCWYKALHQLALSKAYALLSMSYVLVWIASMVLPGWEGTFSLKALLGVACIMSGLMLIFLPTTKQRY</sequence>
<gene>
    <name evidence="1" type="primary">arnF</name>
    <name type="ordered locus">EFER_0910</name>
</gene>
<proteinExistence type="inferred from homology"/>
<reference key="1">
    <citation type="journal article" date="2009" name="PLoS Genet.">
        <title>Organised genome dynamics in the Escherichia coli species results in highly diverse adaptive paths.</title>
        <authorList>
            <person name="Touchon M."/>
            <person name="Hoede C."/>
            <person name="Tenaillon O."/>
            <person name="Barbe V."/>
            <person name="Baeriswyl S."/>
            <person name="Bidet P."/>
            <person name="Bingen E."/>
            <person name="Bonacorsi S."/>
            <person name="Bouchier C."/>
            <person name="Bouvet O."/>
            <person name="Calteau A."/>
            <person name="Chiapello H."/>
            <person name="Clermont O."/>
            <person name="Cruveiller S."/>
            <person name="Danchin A."/>
            <person name="Diard M."/>
            <person name="Dossat C."/>
            <person name="Karoui M.E."/>
            <person name="Frapy E."/>
            <person name="Garry L."/>
            <person name="Ghigo J.M."/>
            <person name="Gilles A.M."/>
            <person name="Johnson J."/>
            <person name="Le Bouguenec C."/>
            <person name="Lescat M."/>
            <person name="Mangenot S."/>
            <person name="Martinez-Jehanne V."/>
            <person name="Matic I."/>
            <person name="Nassif X."/>
            <person name="Oztas S."/>
            <person name="Petit M.A."/>
            <person name="Pichon C."/>
            <person name="Rouy Z."/>
            <person name="Ruf C.S."/>
            <person name="Schneider D."/>
            <person name="Tourret J."/>
            <person name="Vacherie B."/>
            <person name="Vallenet D."/>
            <person name="Medigue C."/>
            <person name="Rocha E.P.C."/>
            <person name="Denamur E."/>
        </authorList>
    </citation>
    <scope>NUCLEOTIDE SEQUENCE [LARGE SCALE GENOMIC DNA]</scope>
    <source>
        <strain>ATCC 35469 / DSM 13698 / BCRC 15582 / CCUG 18766 / IAM 14443 / JCM 21226 / LMG 7866 / NBRC 102419 / NCTC 12128 / CDC 0568-73</strain>
    </source>
</reference>
<feature type="chain" id="PRO_0000382005" description="Probable 4-amino-4-deoxy-L-arabinose-phosphoundecaprenol flippase subunit ArnF">
    <location>
        <begin position="1"/>
        <end position="128"/>
    </location>
</feature>
<feature type="transmembrane region" description="Helical" evidence="1">
    <location>
        <begin position="1"/>
        <end position="21"/>
    </location>
</feature>
<feature type="topological domain" description="Periplasmic" evidence="1">
    <location>
        <begin position="22"/>
        <end position="35"/>
    </location>
</feature>
<feature type="transmembrane region" description="Helical" evidence="1">
    <location>
        <begin position="36"/>
        <end position="56"/>
    </location>
</feature>
<feature type="topological domain" description="Cytoplasmic" evidence="1">
    <location>
        <begin position="57"/>
        <end position="76"/>
    </location>
</feature>
<feature type="transmembrane region" description="Helical" evidence="1">
    <location>
        <begin position="77"/>
        <end position="97"/>
    </location>
</feature>
<feature type="topological domain" description="Periplasmic" evidence="1">
    <location>
        <begin position="98"/>
        <end position="100"/>
    </location>
</feature>
<feature type="transmembrane region" description="Helical" evidence="1">
    <location>
        <begin position="101"/>
        <end position="121"/>
    </location>
</feature>
<feature type="topological domain" description="Cytoplasmic" evidence="1">
    <location>
        <begin position="122"/>
        <end position="128"/>
    </location>
</feature>
<dbReference type="EMBL" id="CU928158">
    <property type="protein sequence ID" value="CAQ88445.1"/>
    <property type="status" value="ALT_INIT"/>
    <property type="molecule type" value="Genomic_DNA"/>
</dbReference>
<dbReference type="RefSeq" id="WP_000523871.1">
    <property type="nucleotide sequence ID" value="NC_011740.1"/>
</dbReference>
<dbReference type="GeneID" id="75058031"/>
<dbReference type="KEGG" id="efe:EFER_0910"/>
<dbReference type="HOGENOM" id="CLU_1243704_0_0_6"/>
<dbReference type="OrthoDB" id="5592809at2"/>
<dbReference type="UniPathway" id="UPA00030"/>
<dbReference type="Proteomes" id="UP000000745">
    <property type="component" value="Chromosome"/>
</dbReference>
<dbReference type="GO" id="GO:0005886">
    <property type="term" value="C:plasma membrane"/>
    <property type="evidence" value="ECO:0007669"/>
    <property type="project" value="UniProtKB-SubCell"/>
</dbReference>
<dbReference type="GO" id="GO:1901505">
    <property type="term" value="F:carbohydrate derivative transmembrane transporter activity"/>
    <property type="evidence" value="ECO:0007669"/>
    <property type="project" value="InterPro"/>
</dbReference>
<dbReference type="GO" id="GO:0009245">
    <property type="term" value="P:lipid A biosynthetic process"/>
    <property type="evidence" value="ECO:0007669"/>
    <property type="project" value="UniProtKB-UniRule"/>
</dbReference>
<dbReference type="GO" id="GO:0009103">
    <property type="term" value="P:lipopolysaccharide biosynthetic process"/>
    <property type="evidence" value="ECO:0007669"/>
    <property type="project" value="UniProtKB-UniRule"/>
</dbReference>
<dbReference type="Gene3D" id="1.10.3730.20">
    <property type="match status" value="1"/>
</dbReference>
<dbReference type="HAMAP" id="MF_00538">
    <property type="entry name" value="Flippase_ArnF"/>
    <property type="match status" value="1"/>
</dbReference>
<dbReference type="InterPro" id="IPR022832">
    <property type="entry name" value="Flippase_ArnF"/>
</dbReference>
<dbReference type="InterPro" id="IPR000390">
    <property type="entry name" value="Small_drug/metabolite_transptr"/>
</dbReference>
<dbReference type="NCBIfam" id="NF002816">
    <property type="entry name" value="PRK02971.1-2"/>
    <property type="match status" value="1"/>
</dbReference>
<dbReference type="PANTHER" id="PTHR30561:SF9">
    <property type="entry name" value="4-AMINO-4-DEOXY-L-ARABINOSE-PHOSPHOUNDECAPRENOL FLIPPASE SUBUNIT ARNF-RELATED"/>
    <property type="match status" value="1"/>
</dbReference>
<dbReference type="PANTHER" id="PTHR30561">
    <property type="entry name" value="SMR FAMILY PROTON-DEPENDENT DRUG EFFLUX TRANSPORTER SUGE"/>
    <property type="match status" value="1"/>
</dbReference>
<dbReference type="SUPFAM" id="SSF103481">
    <property type="entry name" value="Multidrug resistance efflux transporter EmrE"/>
    <property type="match status" value="1"/>
</dbReference>
<name>ARNF_ESCF3</name>
<keyword id="KW-0997">Cell inner membrane</keyword>
<keyword id="KW-1003">Cell membrane</keyword>
<keyword id="KW-0441">Lipid A biosynthesis</keyword>
<keyword id="KW-0444">Lipid biosynthesis</keyword>
<keyword id="KW-0443">Lipid metabolism</keyword>
<keyword id="KW-0448">Lipopolysaccharide biosynthesis</keyword>
<keyword id="KW-0472">Membrane</keyword>
<keyword id="KW-0812">Transmembrane</keyword>
<keyword id="KW-1133">Transmembrane helix</keyword>
<keyword id="KW-0813">Transport</keyword>
<evidence type="ECO:0000255" key="1">
    <source>
        <dbReference type="HAMAP-Rule" id="MF_00538"/>
    </source>
</evidence>
<evidence type="ECO:0000305" key="2"/>
<comment type="function">
    <text evidence="1">Translocates 4-amino-4-deoxy-L-arabinose-phosphoundecaprenol (alpha-L-Ara4N-phosphoundecaprenol) from the cytoplasmic to the periplasmic side of the inner membrane.</text>
</comment>
<comment type="pathway">
    <text evidence="1">Bacterial outer membrane biogenesis; lipopolysaccharide biosynthesis.</text>
</comment>
<comment type="subunit">
    <text evidence="1">Heterodimer of ArnE and ArnF.</text>
</comment>
<comment type="subcellular location">
    <subcellularLocation>
        <location evidence="1">Cell inner membrane</location>
        <topology evidence="1">Multi-pass membrane protein</topology>
    </subcellularLocation>
</comment>
<comment type="similarity">
    <text evidence="1">Belongs to the ArnF family.</text>
</comment>
<comment type="sequence caution" evidence="2">
    <conflict type="erroneous initiation">
        <sequence resource="EMBL-CDS" id="CAQ88445"/>
    </conflict>
</comment>
<organism>
    <name type="scientific">Escherichia fergusonii (strain ATCC 35469 / DSM 13698 / CCUG 18766 / IAM 14443 / JCM 21226 / LMG 7866 / NBRC 102419 / NCTC 12128 / CDC 0568-73)</name>
    <dbReference type="NCBI Taxonomy" id="585054"/>
    <lineage>
        <taxon>Bacteria</taxon>
        <taxon>Pseudomonadati</taxon>
        <taxon>Pseudomonadota</taxon>
        <taxon>Gammaproteobacteria</taxon>
        <taxon>Enterobacterales</taxon>
        <taxon>Enterobacteriaceae</taxon>
        <taxon>Escherichia</taxon>
    </lineage>
</organism>
<accession>B7LM72</accession>